<keyword id="KW-0285">Flavoprotein</keyword>
<keyword id="KW-0288">FMN</keyword>
<keyword id="KW-0521">NADP</keyword>
<keyword id="KW-0560">Oxidoreductase</keyword>
<keyword id="KW-1185">Reference proteome</keyword>
<sequence>MKGLIIIGSAQVNSHTSALARYLTEHFKTHDIEAEIFDLAEKPLNQLDFSGTTPSIDEIKQNMKDLKEKAMAADFLILGTPNYHGSYSGILKNALDHLNMDYFKMKPVGLIGNSGGIVSSEPLSHLRVIVRSLLGIAVPTQIATHDSDFAKNEDGSYYLNDSEFQLRARLFVDQIVSFVNNSPYEHLK</sequence>
<gene>
    <name type="primary">azo1</name>
    <name type="ordered locus">SAOUHSC_00543</name>
</gene>
<protein>
    <recommendedName>
        <fullName>FMN-dependent NADPH-azoreductase</fullName>
        <ecNumber>1.7.-.-</ecNumber>
    </recommendedName>
    <alternativeName>
        <fullName>NADPH-dependent flavo-azoreductase</fullName>
    </alternativeName>
    <alternativeName>
        <fullName>NADPH-flavin azoreductase</fullName>
    </alternativeName>
</protein>
<evidence type="ECO:0000250" key="1"/>
<evidence type="ECO:0000305" key="2"/>
<feature type="chain" id="PRO_0000245989" description="FMN-dependent NADPH-azoreductase">
    <location>
        <begin position="1"/>
        <end position="188"/>
    </location>
</feature>
<accession>Q2G0L7</accession>
<comment type="function">
    <text evidence="1">Catalyzes the reductive cleavage of azo bond in aromatic azo compounds to the corresponding amines. Requires NADPH, but not NADH, as an electron donor for its activity (By similarity).</text>
</comment>
<comment type="cofactor">
    <cofactor evidence="1">
        <name>FMN</name>
        <dbReference type="ChEBI" id="CHEBI:58210"/>
    </cofactor>
</comment>
<comment type="subunit">
    <text evidence="1">Homotetramer.</text>
</comment>
<comment type="similarity">
    <text evidence="2">Belongs to the azoreductase type 2 family.</text>
</comment>
<reference key="1">
    <citation type="book" date="2006" name="Gram positive pathogens, 2nd edition">
        <title>The Staphylococcus aureus NCTC 8325 genome.</title>
        <editorList>
            <person name="Fischetti V."/>
            <person name="Novick R."/>
            <person name="Ferretti J."/>
            <person name="Portnoy D."/>
            <person name="Rood J."/>
        </editorList>
        <authorList>
            <person name="Gillaspy A.F."/>
            <person name="Worrell V."/>
            <person name="Orvis J."/>
            <person name="Roe B.A."/>
            <person name="Dyer D.W."/>
            <person name="Iandolo J.J."/>
        </authorList>
    </citation>
    <scope>NUCLEOTIDE SEQUENCE [LARGE SCALE GENOMIC DNA]</scope>
    <source>
        <strain>NCTC 8325 / PS 47</strain>
    </source>
</reference>
<organism>
    <name type="scientific">Staphylococcus aureus (strain NCTC 8325 / PS 47)</name>
    <dbReference type="NCBI Taxonomy" id="93061"/>
    <lineage>
        <taxon>Bacteria</taxon>
        <taxon>Bacillati</taxon>
        <taxon>Bacillota</taxon>
        <taxon>Bacilli</taxon>
        <taxon>Bacillales</taxon>
        <taxon>Staphylococcaceae</taxon>
        <taxon>Staphylococcus</taxon>
    </lineage>
</organism>
<dbReference type="EC" id="1.7.-.-"/>
<dbReference type="EMBL" id="CP000253">
    <property type="protein sequence ID" value="ABD29691.1"/>
    <property type="molecule type" value="Genomic_DNA"/>
</dbReference>
<dbReference type="RefSeq" id="WP_000677261.1">
    <property type="nucleotide sequence ID" value="NZ_LS483365.1"/>
</dbReference>
<dbReference type="RefSeq" id="YP_499115.1">
    <property type="nucleotide sequence ID" value="NC_007795.1"/>
</dbReference>
<dbReference type="SMR" id="Q2G0L7"/>
<dbReference type="STRING" id="93061.SAOUHSC_00543"/>
<dbReference type="PaxDb" id="1280-SAXN108_0616"/>
<dbReference type="GeneID" id="3920823"/>
<dbReference type="KEGG" id="sao:SAOUHSC_00543"/>
<dbReference type="PATRIC" id="fig|93061.5.peg.489"/>
<dbReference type="eggNOG" id="COG0431">
    <property type="taxonomic scope" value="Bacteria"/>
</dbReference>
<dbReference type="HOGENOM" id="CLU_055322_1_2_9"/>
<dbReference type="OrthoDB" id="9790975at2"/>
<dbReference type="PRO" id="PR:Q2G0L7"/>
<dbReference type="Proteomes" id="UP000008816">
    <property type="component" value="Chromosome"/>
</dbReference>
<dbReference type="GO" id="GO:0005829">
    <property type="term" value="C:cytosol"/>
    <property type="evidence" value="ECO:0000318"/>
    <property type="project" value="GO_Central"/>
</dbReference>
<dbReference type="GO" id="GO:0010181">
    <property type="term" value="F:FMN binding"/>
    <property type="evidence" value="ECO:0000318"/>
    <property type="project" value="GO_Central"/>
</dbReference>
<dbReference type="GO" id="GO:0016491">
    <property type="term" value="F:oxidoreductase activity"/>
    <property type="evidence" value="ECO:0007669"/>
    <property type="project" value="UniProtKB-KW"/>
</dbReference>
<dbReference type="Gene3D" id="3.40.50.360">
    <property type="match status" value="1"/>
</dbReference>
<dbReference type="InterPro" id="IPR029039">
    <property type="entry name" value="Flavoprotein-like_sf"/>
</dbReference>
<dbReference type="InterPro" id="IPR005025">
    <property type="entry name" value="FMN_Rdtase-like_dom"/>
</dbReference>
<dbReference type="InterPro" id="IPR050712">
    <property type="entry name" value="NAD(P)H-dep_reductase"/>
</dbReference>
<dbReference type="PANTHER" id="PTHR30543">
    <property type="entry name" value="CHROMATE REDUCTASE"/>
    <property type="match status" value="1"/>
</dbReference>
<dbReference type="PANTHER" id="PTHR30543:SF21">
    <property type="entry name" value="NAD(P)H-DEPENDENT FMN REDUCTASE LOT6"/>
    <property type="match status" value="1"/>
</dbReference>
<dbReference type="Pfam" id="PF03358">
    <property type="entry name" value="FMN_red"/>
    <property type="match status" value="1"/>
</dbReference>
<dbReference type="SUPFAM" id="SSF52218">
    <property type="entry name" value="Flavoproteins"/>
    <property type="match status" value="1"/>
</dbReference>
<name>AZO1_STAA8</name>
<proteinExistence type="inferred from homology"/>